<feature type="chain" id="PRO_1000099849" description="Anthranilate phosphoribosyltransferase">
    <location>
        <begin position="1"/>
        <end position="334"/>
    </location>
</feature>
<feature type="binding site" evidence="1">
    <location>
        <position position="79"/>
    </location>
    <ligand>
        <name>5-phospho-alpha-D-ribose 1-diphosphate</name>
        <dbReference type="ChEBI" id="CHEBI:58017"/>
    </ligand>
</feature>
<feature type="binding site" evidence="1">
    <location>
        <position position="79"/>
    </location>
    <ligand>
        <name>anthranilate</name>
        <dbReference type="ChEBI" id="CHEBI:16567"/>
        <label>1</label>
    </ligand>
</feature>
<feature type="binding site" evidence="1">
    <location>
        <begin position="82"/>
        <end position="83"/>
    </location>
    <ligand>
        <name>5-phospho-alpha-D-ribose 1-diphosphate</name>
        <dbReference type="ChEBI" id="CHEBI:58017"/>
    </ligand>
</feature>
<feature type="binding site" evidence="1">
    <location>
        <position position="87"/>
    </location>
    <ligand>
        <name>5-phospho-alpha-D-ribose 1-diphosphate</name>
        <dbReference type="ChEBI" id="CHEBI:58017"/>
    </ligand>
</feature>
<feature type="binding site" evidence="1">
    <location>
        <begin position="89"/>
        <end position="92"/>
    </location>
    <ligand>
        <name>5-phospho-alpha-D-ribose 1-diphosphate</name>
        <dbReference type="ChEBI" id="CHEBI:58017"/>
    </ligand>
</feature>
<feature type="binding site" evidence="1">
    <location>
        <position position="91"/>
    </location>
    <ligand>
        <name>Mg(2+)</name>
        <dbReference type="ChEBI" id="CHEBI:18420"/>
        <label>1</label>
    </ligand>
</feature>
<feature type="binding site" evidence="1">
    <location>
        <begin position="107"/>
        <end position="115"/>
    </location>
    <ligand>
        <name>5-phospho-alpha-D-ribose 1-diphosphate</name>
        <dbReference type="ChEBI" id="CHEBI:58017"/>
    </ligand>
</feature>
<feature type="binding site" evidence="1">
    <location>
        <position position="110"/>
    </location>
    <ligand>
        <name>anthranilate</name>
        <dbReference type="ChEBI" id="CHEBI:16567"/>
        <label>1</label>
    </ligand>
</feature>
<feature type="binding site" evidence="1">
    <location>
        <position position="119"/>
    </location>
    <ligand>
        <name>5-phospho-alpha-D-ribose 1-diphosphate</name>
        <dbReference type="ChEBI" id="CHEBI:58017"/>
    </ligand>
</feature>
<feature type="binding site" evidence="1">
    <location>
        <position position="165"/>
    </location>
    <ligand>
        <name>anthranilate</name>
        <dbReference type="ChEBI" id="CHEBI:16567"/>
        <label>2</label>
    </ligand>
</feature>
<feature type="binding site" evidence="1">
    <location>
        <position position="224"/>
    </location>
    <ligand>
        <name>Mg(2+)</name>
        <dbReference type="ChEBI" id="CHEBI:18420"/>
        <label>2</label>
    </ligand>
</feature>
<feature type="binding site" evidence="1">
    <location>
        <position position="225"/>
    </location>
    <ligand>
        <name>Mg(2+)</name>
        <dbReference type="ChEBI" id="CHEBI:18420"/>
        <label>1</label>
    </ligand>
</feature>
<feature type="binding site" evidence="1">
    <location>
        <position position="225"/>
    </location>
    <ligand>
        <name>Mg(2+)</name>
        <dbReference type="ChEBI" id="CHEBI:18420"/>
        <label>2</label>
    </ligand>
</feature>
<proteinExistence type="inferred from homology"/>
<dbReference type="EC" id="2.4.2.18" evidence="1"/>
<dbReference type="EMBL" id="CP001015">
    <property type="protein sequence ID" value="ACF55364.1"/>
    <property type="molecule type" value="Genomic_DNA"/>
</dbReference>
<dbReference type="SMR" id="B5E7M6"/>
<dbReference type="KEGG" id="spx:SPG_1711"/>
<dbReference type="HOGENOM" id="CLU_034315_2_1_9"/>
<dbReference type="UniPathway" id="UPA00035">
    <property type="reaction ID" value="UER00041"/>
</dbReference>
<dbReference type="GO" id="GO:0005829">
    <property type="term" value="C:cytosol"/>
    <property type="evidence" value="ECO:0007669"/>
    <property type="project" value="TreeGrafter"/>
</dbReference>
<dbReference type="GO" id="GO:0004048">
    <property type="term" value="F:anthranilate phosphoribosyltransferase activity"/>
    <property type="evidence" value="ECO:0007669"/>
    <property type="project" value="UniProtKB-UniRule"/>
</dbReference>
<dbReference type="GO" id="GO:0000287">
    <property type="term" value="F:magnesium ion binding"/>
    <property type="evidence" value="ECO:0007669"/>
    <property type="project" value="UniProtKB-UniRule"/>
</dbReference>
<dbReference type="GO" id="GO:0000162">
    <property type="term" value="P:L-tryptophan biosynthetic process"/>
    <property type="evidence" value="ECO:0007669"/>
    <property type="project" value="UniProtKB-UniRule"/>
</dbReference>
<dbReference type="FunFam" id="3.40.1030.10:FF:000002">
    <property type="entry name" value="Anthranilate phosphoribosyltransferase"/>
    <property type="match status" value="1"/>
</dbReference>
<dbReference type="Gene3D" id="3.40.1030.10">
    <property type="entry name" value="Nucleoside phosphorylase/phosphoribosyltransferase catalytic domain"/>
    <property type="match status" value="1"/>
</dbReference>
<dbReference type="Gene3D" id="1.20.970.10">
    <property type="entry name" value="Transferase, Pyrimidine Nucleoside Phosphorylase, Chain C"/>
    <property type="match status" value="1"/>
</dbReference>
<dbReference type="HAMAP" id="MF_00211">
    <property type="entry name" value="TrpD"/>
    <property type="match status" value="1"/>
</dbReference>
<dbReference type="InterPro" id="IPR005940">
    <property type="entry name" value="Anthranilate_Pribosyl_Tfrase"/>
</dbReference>
<dbReference type="InterPro" id="IPR000312">
    <property type="entry name" value="Glycosyl_Trfase_fam3"/>
</dbReference>
<dbReference type="InterPro" id="IPR017459">
    <property type="entry name" value="Glycosyl_Trfase_fam3_N_dom"/>
</dbReference>
<dbReference type="InterPro" id="IPR036320">
    <property type="entry name" value="Glycosyl_Trfase_fam3_N_dom_sf"/>
</dbReference>
<dbReference type="InterPro" id="IPR035902">
    <property type="entry name" value="Nuc_phospho_transferase"/>
</dbReference>
<dbReference type="NCBIfam" id="TIGR01245">
    <property type="entry name" value="trpD"/>
    <property type="match status" value="1"/>
</dbReference>
<dbReference type="PANTHER" id="PTHR43285">
    <property type="entry name" value="ANTHRANILATE PHOSPHORIBOSYLTRANSFERASE"/>
    <property type="match status" value="1"/>
</dbReference>
<dbReference type="PANTHER" id="PTHR43285:SF2">
    <property type="entry name" value="ANTHRANILATE PHOSPHORIBOSYLTRANSFERASE"/>
    <property type="match status" value="1"/>
</dbReference>
<dbReference type="Pfam" id="PF02885">
    <property type="entry name" value="Glycos_trans_3N"/>
    <property type="match status" value="1"/>
</dbReference>
<dbReference type="Pfam" id="PF00591">
    <property type="entry name" value="Glycos_transf_3"/>
    <property type="match status" value="1"/>
</dbReference>
<dbReference type="SUPFAM" id="SSF52418">
    <property type="entry name" value="Nucleoside phosphorylase/phosphoribosyltransferase catalytic domain"/>
    <property type="match status" value="1"/>
</dbReference>
<dbReference type="SUPFAM" id="SSF47648">
    <property type="entry name" value="Nucleoside phosphorylase/phosphoribosyltransferase N-terminal domain"/>
    <property type="match status" value="1"/>
</dbReference>
<evidence type="ECO:0000255" key="1">
    <source>
        <dbReference type="HAMAP-Rule" id="MF_00211"/>
    </source>
</evidence>
<gene>
    <name evidence="1" type="primary">trpD</name>
    <name type="ordered locus">SPG_1711</name>
</gene>
<reference key="1">
    <citation type="journal article" date="2001" name="Microb. Drug Resist.">
        <title>Annotated draft genomic sequence from a Streptococcus pneumoniae type 19F clinical isolate.</title>
        <authorList>
            <person name="Dopazo J."/>
            <person name="Mendoza A."/>
            <person name="Herrero J."/>
            <person name="Caldara F."/>
            <person name="Humbert Y."/>
            <person name="Friedli L."/>
            <person name="Guerrier M."/>
            <person name="Grand-Schenk E."/>
            <person name="Gandin C."/>
            <person name="de Francesco M."/>
            <person name="Polissi A."/>
            <person name="Buell G."/>
            <person name="Feger G."/>
            <person name="Garcia E."/>
            <person name="Peitsch M."/>
            <person name="Garcia-Bustos J.F."/>
        </authorList>
    </citation>
    <scope>NUCLEOTIDE SEQUENCE [LARGE SCALE GENOMIC DNA]</scope>
    <source>
        <strain>G54</strain>
    </source>
</reference>
<reference key="2">
    <citation type="submission" date="2008-03" db="EMBL/GenBank/DDBJ databases">
        <title>Pneumococcal beta glucoside metabolism investigated by whole genome comparison.</title>
        <authorList>
            <person name="Mulas L."/>
            <person name="Trappetti C."/>
            <person name="Hakenbeck R."/>
            <person name="Iannelli F."/>
            <person name="Pozzi G."/>
            <person name="Davidsen T.M."/>
            <person name="Tettelin H."/>
            <person name="Oggioni M."/>
        </authorList>
    </citation>
    <scope>NUCLEOTIDE SEQUENCE [LARGE SCALE GENOMIC DNA]</scope>
    <source>
        <strain>G54</strain>
    </source>
</reference>
<organism>
    <name type="scientific">Streptococcus pneumoniae serotype 19F (strain G54)</name>
    <dbReference type="NCBI Taxonomy" id="512566"/>
    <lineage>
        <taxon>Bacteria</taxon>
        <taxon>Bacillati</taxon>
        <taxon>Bacillota</taxon>
        <taxon>Bacilli</taxon>
        <taxon>Lactobacillales</taxon>
        <taxon>Streptococcaceae</taxon>
        <taxon>Streptococcus</taxon>
    </lineage>
</organism>
<accession>B5E7M6</accession>
<keyword id="KW-0028">Amino-acid biosynthesis</keyword>
<keyword id="KW-0057">Aromatic amino acid biosynthesis</keyword>
<keyword id="KW-0328">Glycosyltransferase</keyword>
<keyword id="KW-0460">Magnesium</keyword>
<keyword id="KW-0479">Metal-binding</keyword>
<keyword id="KW-0808">Transferase</keyword>
<keyword id="KW-0822">Tryptophan biosynthesis</keyword>
<sequence length="334" mass="35933">MKEIIEKLAKFENLSGVEMTDVIERIVTGRVTEAQIASLLLALKMKGETPEERTAIARVMRGHAQHIPTEIHDAMDNCGTGGDKSFSFNISTTAAFVLAGGGIHMAKHGNRSISSKSGSADVLEALGINLDLKPAELGKVFDKTGIVFLFAKNMHPAMKYIMPARLELGIPTIMNLTGPLIHPMALETQLLGISRPELLESTAQVLKNMGRKRAIVVAGPEGLDEAGLNGTTKIALLENGEISLSSFTPEDLGMEGYAMEDIRGGNAQENAEILLSVLKNEASPFLETTVLNAGLGFYANGKIDSIKEGVALARQVIARGKALEKLRLLQEYQK</sequence>
<protein>
    <recommendedName>
        <fullName evidence="1">Anthranilate phosphoribosyltransferase</fullName>
        <ecNumber evidence="1">2.4.2.18</ecNumber>
    </recommendedName>
</protein>
<comment type="function">
    <text evidence="1">Catalyzes the transfer of the phosphoribosyl group of 5-phosphorylribose-1-pyrophosphate (PRPP) to anthranilate to yield N-(5'-phosphoribosyl)-anthranilate (PRA).</text>
</comment>
<comment type="catalytic activity">
    <reaction evidence="1">
        <text>N-(5-phospho-beta-D-ribosyl)anthranilate + diphosphate = 5-phospho-alpha-D-ribose 1-diphosphate + anthranilate</text>
        <dbReference type="Rhea" id="RHEA:11768"/>
        <dbReference type="ChEBI" id="CHEBI:16567"/>
        <dbReference type="ChEBI" id="CHEBI:18277"/>
        <dbReference type="ChEBI" id="CHEBI:33019"/>
        <dbReference type="ChEBI" id="CHEBI:58017"/>
        <dbReference type="EC" id="2.4.2.18"/>
    </reaction>
</comment>
<comment type="cofactor">
    <cofactor evidence="1">
        <name>Mg(2+)</name>
        <dbReference type="ChEBI" id="CHEBI:18420"/>
    </cofactor>
    <text evidence="1">Binds 2 magnesium ions per monomer.</text>
</comment>
<comment type="pathway">
    <text evidence="1">Amino-acid biosynthesis; L-tryptophan biosynthesis; L-tryptophan from chorismate: step 2/5.</text>
</comment>
<comment type="subunit">
    <text evidence="1">Homodimer.</text>
</comment>
<comment type="similarity">
    <text evidence="1">Belongs to the anthranilate phosphoribosyltransferase family.</text>
</comment>
<name>TRPD_STRP4</name>